<dbReference type="EC" id="1.8.1.-"/>
<dbReference type="EMBL" id="M57706">
    <property type="protein sequence ID" value="AAA99277.1"/>
    <property type="molecule type" value="Genomic_DNA"/>
</dbReference>
<dbReference type="EMBL" id="AE006468">
    <property type="protein sequence ID" value="AAL21444.1"/>
    <property type="molecule type" value="Genomic_DNA"/>
</dbReference>
<dbReference type="PIR" id="C38453">
    <property type="entry name" value="C38453"/>
</dbReference>
<dbReference type="RefSeq" id="NP_461485.1">
    <property type="nucleotide sequence ID" value="NC_003197.2"/>
</dbReference>
<dbReference type="RefSeq" id="WP_000020685.1">
    <property type="nucleotide sequence ID" value="NC_003197.2"/>
</dbReference>
<dbReference type="SMR" id="P0A1Y2"/>
<dbReference type="STRING" id="99287.STM2550"/>
<dbReference type="PaxDb" id="99287-STM2550"/>
<dbReference type="DNASU" id="1254072"/>
<dbReference type="GeneID" id="1254072"/>
<dbReference type="KEGG" id="stm:STM2550"/>
<dbReference type="PATRIC" id="fig|99287.12.peg.2690"/>
<dbReference type="HOGENOM" id="CLU_072599_1_0_6"/>
<dbReference type="OMA" id="GGCEYNP"/>
<dbReference type="PhylomeDB" id="P0A1Y2"/>
<dbReference type="BioCyc" id="MetaCyc:MONOMER-12546"/>
<dbReference type="BioCyc" id="SENT99287:STM2550-MONOMER"/>
<dbReference type="UniPathway" id="UPA00370"/>
<dbReference type="Proteomes" id="UP000001014">
    <property type="component" value="Chromosome"/>
</dbReference>
<dbReference type="GO" id="GO:0005737">
    <property type="term" value="C:cytoplasm"/>
    <property type="evidence" value="ECO:0007669"/>
    <property type="project" value="UniProtKB-SubCell"/>
</dbReference>
<dbReference type="GO" id="GO:0051539">
    <property type="term" value="F:4 iron, 4 sulfur cluster binding"/>
    <property type="evidence" value="ECO:0007669"/>
    <property type="project" value="UniProtKB-KW"/>
</dbReference>
<dbReference type="GO" id="GO:0020037">
    <property type="term" value="F:heme binding"/>
    <property type="evidence" value="ECO:0007669"/>
    <property type="project" value="InterPro"/>
</dbReference>
<dbReference type="GO" id="GO:0046872">
    <property type="term" value="F:metal ion binding"/>
    <property type="evidence" value="ECO:0007669"/>
    <property type="project" value="UniProtKB-KW"/>
</dbReference>
<dbReference type="GO" id="GO:0016491">
    <property type="term" value="F:oxidoreductase activity"/>
    <property type="evidence" value="ECO:0007669"/>
    <property type="project" value="UniProtKB-KW"/>
</dbReference>
<dbReference type="GO" id="GO:0000103">
    <property type="term" value="P:sulfate assimilation"/>
    <property type="evidence" value="ECO:0000318"/>
    <property type="project" value="GO_Central"/>
</dbReference>
<dbReference type="FunFam" id="3.30.70.20:FF:000033">
    <property type="entry name" value="Anaerobic sulfite reductase subunit AsrC"/>
    <property type="match status" value="1"/>
</dbReference>
<dbReference type="Gene3D" id="3.30.70.20">
    <property type="match status" value="1"/>
</dbReference>
<dbReference type="Gene3D" id="3.90.480.20">
    <property type="match status" value="1"/>
</dbReference>
<dbReference type="Gene3D" id="3.30.413.10">
    <property type="entry name" value="Sulfite Reductase Hemoprotein, domain 1"/>
    <property type="match status" value="1"/>
</dbReference>
<dbReference type="InterPro" id="IPR017896">
    <property type="entry name" value="4Fe4S_Fe-S-bd"/>
</dbReference>
<dbReference type="InterPro" id="IPR017900">
    <property type="entry name" value="4Fe4S_Fe_S_CS"/>
</dbReference>
<dbReference type="InterPro" id="IPR005117">
    <property type="entry name" value="NiRdtase/SiRdtase_haem-b_fer"/>
</dbReference>
<dbReference type="InterPro" id="IPR036136">
    <property type="entry name" value="Nit/Sulf_reduc_fer-like_dom_sf"/>
</dbReference>
<dbReference type="InterPro" id="IPR006067">
    <property type="entry name" value="NO2/SO3_Rdtase_4Fe4S_dom"/>
</dbReference>
<dbReference type="InterPro" id="IPR045169">
    <property type="entry name" value="NO2/SO3_Rdtase_4Fe4S_prot"/>
</dbReference>
<dbReference type="InterPro" id="IPR045854">
    <property type="entry name" value="NO2/SO3_Rdtase_4Fe4S_sf"/>
</dbReference>
<dbReference type="InterPro" id="IPR006066">
    <property type="entry name" value="NO2/SO3_Rdtase_FeS/sirohaem_BS"/>
</dbReference>
<dbReference type="InterPro" id="IPR014261">
    <property type="entry name" value="Sulphite_reductase_C"/>
</dbReference>
<dbReference type="NCBIfam" id="TIGR02912">
    <property type="entry name" value="sulfite_red_C"/>
    <property type="match status" value="1"/>
</dbReference>
<dbReference type="PANTHER" id="PTHR11493:SF54">
    <property type="entry name" value="ANAEROBIC SULFITE REDUCTASE SUBUNIT C"/>
    <property type="match status" value="1"/>
</dbReference>
<dbReference type="PANTHER" id="PTHR11493">
    <property type="entry name" value="SULFITE REDUCTASE [NADPH] SUBUNIT BETA-RELATED"/>
    <property type="match status" value="1"/>
</dbReference>
<dbReference type="Pfam" id="PF13237">
    <property type="entry name" value="Fer4_10"/>
    <property type="match status" value="1"/>
</dbReference>
<dbReference type="Pfam" id="PF01077">
    <property type="entry name" value="NIR_SIR"/>
    <property type="match status" value="1"/>
</dbReference>
<dbReference type="Pfam" id="PF03460">
    <property type="entry name" value="NIR_SIR_ferr"/>
    <property type="match status" value="1"/>
</dbReference>
<dbReference type="PRINTS" id="PR00397">
    <property type="entry name" value="SIROHAEM"/>
</dbReference>
<dbReference type="SUPFAM" id="SSF54862">
    <property type="entry name" value="4Fe-4S ferredoxins"/>
    <property type="match status" value="1"/>
</dbReference>
<dbReference type="SUPFAM" id="SSF56014">
    <property type="entry name" value="Nitrite and sulphite reductase 4Fe-4S domain-like"/>
    <property type="match status" value="1"/>
</dbReference>
<dbReference type="SUPFAM" id="SSF55124">
    <property type="entry name" value="Nitrite/Sulfite reductase N-terminal domain-like"/>
    <property type="match status" value="1"/>
</dbReference>
<dbReference type="PROSITE" id="PS00198">
    <property type="entry name" value="4FE4S_FER_1"/>
    <property type="match status" value="1"/>
</dbReference>
<dbReference type="PROSITE" id="PS51379">
    <property type="entry name" value="4FE4S_FER_2"/>
    <property type="match status" value="2"/>
</dbReference>
<dbReference type="PROSITE" id="PS00365">
    <property type="entry name" value="NIR_SIR"/>
    <property type="match status" value="1"/>
</dbReference>
<keyword id="KW-0004">4Fe-4S</keyword>
<keyword id="KW-0963">Cytoplasm</keyword>
<keyword id="KW-0249">Electron transport</keyword>
<keyword id="KW-0349">Heme</keyword>
<keyword id="KW-0408">Iron</keyword>
<keyword id="KW-0411">Iron-sulfur</keyword>
<keyword id="KW-0479">Metal-binding</keyword>
<keyword id="KW-0520">NAD</keyword>
<keyword id="KW-0560">Oxidoreductase</keyword>
<keyword id="KW-1185">Reference proteome</keyword>
<keyword id="KW-0677">Repeat</keyword>
<keyword id="KW-0813">Transport</keyword>
<sequence length="337" mass="37291">MSIDIDIIKARAKNEYRLSKVRGEAMISVRIPGGILPAHLLTVARDIAETWGNGQIHLTTRQKLAMPGIRYEDIDNVNAALEPFLREIEIELCDVQVEDTKAGYLAIGGRNIVACQGNRICQKANTDTTGLSRRLEKLVYPSPYHLKTVIVGCPNDCAKASMADLGIIGVAKMRFTADRCIGCGACVKACSHHAVGCLALKNGKAVKEESACIGCGECVLACPTLAWQRKPDQLWQVRLGGRTSKKTPRVGKLFLNWVTEDVIKQVIVNLYEFEKEMLGGKPIYLHMGHLIDKGGYLRFKERVLRGVQLNPEAMVAERIYWAEDESVARMHLKPAGH</sequence>
<accession>P0A1Y2</accession>
<accession>P26476</accession>
<reference key="1">
    <citation type="journal article" date="1991" name="J. Bacteriol.">
        <title>Sequence analysis and expression of the Salmonella typhimurium asr operon encoding production of hydrogen sulfide from sulfite.</title>
        <authorList>
            <person name="Huang C.J."/>
            <person name="Barrett E.L."/>
        </authorList>
    </citation>
    <scope>NUCLEOTIDE SEQUENCE [GENOMIC DNA]</scope>
    <source>
        <strain>EB303</strain>
    </source>
</reference>
<reference key="2">
    <citation type="journal article" date="2001" name="Nature">
        <title>Complete genome sequence of Salmonella enterica serovar Typhimurium LT2.</title>
        <authorList>
            <person name="McClelland M."/>
            <person name="Sanderson K.E."/>
            <person name="Spieth J."/>
            <person name="Clifton S.W."/>
            <person name="Latreille P."/>
            <person name="Courtney L."/>
            <person name="Porwollik S."/>
            <person name="Ali J."/>
            <person name="Dante M."/>
            <person name="Du F."/>
            <person name="Hou S."/>
            <person name="Layman D."/>
            <person name="Leonard S."/>
            <person name="Nguyen C."/>
            <person name="Scott K."/>
            <person name="Holmes A."/>
            <person name="Grewal N."/>
            <person name="Mulvaney E."/>
            <person name="Ryan E."/>
            <person name="Sun H."/>
            <person name="Florea L."/>
            <person name="Miller W."/>
            <person name="Stoneking T."/>
            <person name="Nhan M."/>
            <person name="Waterston R."/>
            <person name="Wilson R.K."/>
        </authorList>
    </citation>
    <scope>NUCLEOTIDE SEQUENCE [LARGE SCALE GENOMIC DNA]</scope>
    <source>
        <strain>LT2 / SGSC1412 / ATCC 700720</strain>
    </source>
</reference>
<gene>
    <name type="primary">asrC</name>
    <name type="ordered locus">STM2550</name>
</gene>
<evidence type="ECO:0000250" key="1"/>
<evidence type="ECO:0000255" key="2">
    <source>
        <dbReference type="PROSITE-ProRule" id="PRU00711"/>
    </source>
</evidence>
<evidence type="ECO:0000305" key="3"/>
<protein>
    <recommendedName>
        <fullName>Anaerobic sulfite reductase subunit C</fullName>
        <ecNumber>1.8.1.-</ecNumber>
    </recommendedName>
</protein>
<name>ASRC_SALTY</name>
<proteinExistence type="evidence at transcript level"/>
<organism>
    <name type="scientific">Salmonella typhimurium (strain LT2 / SGSC1412 / ATCC 700720)</name>
    <dbReference type="NCBI Taxonomy" id="99287"/>
    <lineage>
        <taxon>Bacteria</taxon>
        <taxon>Pseudomonadati</taxon>
        <taxon>Pseudomonadota</taxon>
        <taxon>Gammaproteobacteria</taxon>
        <taxon>Enterobacterales</taxon>
        <taxon>Enterobacteriaceae</taxon>
        <taxon>Salmonella</taxon>
    </lineage>
</organism>
<comment type="function">
    <text>This enzyme catalyzes the hydrogen sulfide production from sulfite. It is strictly anaerobic. It is regulated by electron acceptors rather than by cysteine.</text>
</comment>
<comment type="catalytic activity">
    <reaction>
        <text>hydrogen sulfide + 3 NAD(+) + 3 H2O = sulfite + 3 NADH + 4 H(+)</text>
        <dbReference type="Rhea" id="RHEA:55316"/>
        <dbReference type="ChEBI" id="CHEBI:15377"/>
        <dbReference type="ChEBI" id="CHEBI:15378"/>
        <dbReference type="ChEBI" id="CHEBI:17359"/>
        <dbReference type="ChEBI" id="CHEBI:29919"/>
        <dbReference type="ChEBI" id="CHEBI:57540"/>
        <dbReference type="ChEBI" id="CHEBI:57945"/>
    </reaction>
</comment>
<comment type="cofactor">
    <cofactor>
        <name>[4Fe-4S] cluster</name>
        <dbReference type="ChEBI" id="CHEBI:49883"/>
    </cofactor>
    <text>Binds 3 [4Fe-4S] clusters per subunit.</text>
</comment>
<comment type="cofactor">
    <cofactor>
        <name>siroheme</name>
        <dbReference type="ChEBI" id="CHEBI:60052"/>
    </cofactor>
    <text>Binds 1 siroheme per subunit.</text>
</comment>
<comment type="pathway">
    <text>Sulfur metabolism; sulfite reduction.</text>
</comment>
<comment type="subunit">
    <text>The anaerobic sulfite reductase seems to consist of three subunits.</text>
</comment>
<comment type="subcellular location">
    <subcellularLocation>
        <location>Cytoplasm</location>
    </subcellularLocation>
</comment>
<comment type="induction">
    <text>By sulfite.</text>
</comment>
<comment type="similarity">
    <text evidence="3">Belongs to the nitrite and sulfite reductase 4Fe-4S domain family.</text>
</comment>
<feature type="chain" id="PRO_0000199965" description="Anaerobic sulfite reductase subunit C">
    <location>
        <begin position="1"/>
        <end position="337"/>
    </location>
</feature>
<feature type="domain" description="4Fe-4S ferredoxin-type 1" evidence="2">
    <location>
        <begin position="171"/>
        <end position="200"/>
    </location>
</feature>
<feature type="domain" description="4Fe-4S ferredoxin-type 2" evidence="2">
    <location>
        <begin position="203"/>
        <end position="232"/>
    </location>
</feature>
<feature type="binding site" evidence="1">
    <location>
        <position position="115"/>
    </location>
    <ligand>
        <name>[4Fe-4S] cluster</name>
        <dbReference type="ChEBI" id="CHEBI:49883"/>
        <label>1</label>
    </ligand>
</feature>
<feature type="binding site" evidence="1">
    <location>
        <position position="121"/>
    </location>
    <ligand>
        <name>[4Fe-4S] cluster</name>
        <dbReference type="ChEBI" id="CHEBI:49883"/>
        <label>1</label>
    </ligand>
</feature>
<feature type="binding site" evidence="1">
    <location>
        <position position="153"/>
    </location>
    <ligand>
        <name>[4Fe-4S] cluster</name>
        <dbReference type="ChEBI" id="CHEBI:49883"/>
        <label>1</label>
    </ligand>
</feature>
<feature type="binding site" evidence="1">
    <location>
        <position position="157"/>
    </location>
    <ligand>
        <name>[4Fe-4S] cluster</name>
        <dbReference type="ChEBI" id="CHEBI:49883"/>
        <label>1</label>
    </ligand>
</feature>
<feature type="binding site" description="axial binding residue" evidence="1">
    <location>
        <position position="157"/>
    </location>
    <ligand>
        <name>siroheme</name>
        <dbReference type="ChEBI" id="CHEBI:60052"/>
    </ligand>
    <ligandPart>
        <name>Fe</name>
        <dbReference type="ChEBI" id="CHEBI:18248"/>
    </ligandPart>
</feature>
<feature type="binding site" evidence="1">
    <location>
        <position position="180"/>
    </location>
    <ligand>
        <name>[4Fe-4S] cluster</name>
        <dbReference type="ChEBI" id="CHEBI:49883"/>
        <label>2</label>
    </ligand>
</feature>
<feature type="binding site" evidence="1">
    <location>
        <position position="183"/>
    </location>
    <ligand>
        <name>[4Fe-4S] cluster</name>
        <dbReference type="ChEBI" id="CHEBI:49883"/>
        <label>2</label>
    </ligand>
</feature>
<feature type="binding site" evidence="1">
    <location>
        <position position="186"/>
    </location>
    <ligand>
        <name>[4Fe-4S] cluster</name>
        <dbReference type="ChEBI" id="CHEBI:49883"/>
        <label>2</label>
    </ligand>
</feature>
<feature type="binding site" evidence="1">
    <location>
        <position position="190"/>
    </location>
    <ligand>
        <name>[4Fe-4S] cluster</name>
        <dbReference type="ChEBI" id="CHEBI:49883"/>
        <label>3</label>
    </ligand>
</feature>
<feature type="binding site" evidence="1">
    <location>
        <position position="212"/>
    </location>
    <ligand>
        <name>[4Fe-4S] cluster</name>
        <dbReference type="ChEBI" id="CHEBI:49883"/>
        <label>3</label>
    </ligand>
</feature>
<feature type="binding site" evidence="1">
    <location>
        <position position="215"/>
    </location>
    <ligand>
        <name>[4Fe-4S] cluster</name>
        <dbReference type="ChEBI" id="CHEBI:49883"/>
        <label>3</label>
    </ligand>
</feature>
<feature type="binding site" evidence="1">
    <location>
        <position position="218"/>
    </location>
    <ligand>
        <name>[4Fe-4S] cluster</name>
        <dbReference type="ChEBI" id="CHEBI:49883"/>
        <label>3</label>
    </ligand>
</feature>
<feature type="binding site" evidence="1">
    <location>
        <position position="222"/>
    </location>
    <ligand>
        <name>[4Fe-4S] cluster</name>
        <dbReference type="ChEBI" id="CHEBI:49883"/>
        <label>2</label>
    </ligand>
</feature>
<feature type="sequence conflict" description="In Ref. 1; AAA99277." evidence="3" ref="1">
    <original>TPRV</original>
    <variation>SGAL</variation>
    <location>
        <begin position="247"/>
        <end position="250"/>
    </location>
</feature>